<keyword id="KW-0007">Acetylation</keyword>
<keyword id="KW-0106">Calcium</keyword>
<keyword id="KW-0479">Metal-binding</keyword>
<keyword id="KW-0677">Repeat</keyword>
<reference key="1">
    <citation type="journal article" date="2000" name="FEMS Microbiol. Lett.">
        <title>Antisense expression of the calmodulin gene from Colletotrichum trifolii impairs prepenetration development.</title>
        <authorList>
            <person name="Warwar V."/>
            <person name="Oved S."/>
            <person name="Dickman M.B."/>
        </authorList>
    </citation>
    <scope>NUCLEOTIDE SEQUENCE [GENOMIC DNA]</scope>
    <source>
        <strain>Race 1</strain>
    </source>
</reference>
<comment type="function">
    <text>Calmodulin mediates the control of a large number of enzymes, ion channels and other proteins by Ca(2+). Among the enzymes to be stimulated by the calmodulin-Ca(2+) complex are a number of protein kinases and phosphatases.</text>
</comment>
<comment type="miscellaneous">
    <text>This protein has four functional calcium-binding sites.</text>
</comment>
<comment type="similarity">
    <text evidence="3">Belongs to the calmodulin family.</text>
</comment>
<sequence length="149" mass="16997">MADSLTEEQVSEFKEAFSLFDKDGDGQITTKELGTVMRSLGQNPSESELQDMINEVDADNNGTIDFPEFLTMMARKMKDTDSEEEIREAFKVFDRDNNGFISAAELRHVMTSIGEKLTDDEVDEMIREADQDGDGRIDYNEFVQLMMQK</sequence>
<evidence type="ECO:0000250" key="1"/>
<evidence type="ECO:0000255" key="2">
    <source>
        <dbReference type="PROSITE-ProRule" id="PRU00448"/>
    </source>
</evidence>
<evidence type="ECO:0000305" key="3"/>
<dbReference type="EMBL" id="U15993">
    <property type="protein sequence ID" value="AAA51652.1"/>
    <property type="molecule type" value="Genomic_DNA"/>
</dbReference>
<dbReference type="SMR" id="P61860"/>
<dbReference type="GO" id="GO:0016460">
    <property type="term" value="C:myosin II complex"/>
    <property type="evidence" value="ECO:0007669"/>
    <property type="project" value="TreeGrafter"/>
</dbReference>
<dbReference type="GO" id="GO:0005509">
    <property type="term" value="F:calcium ion binding"/>
    <property type="evidence" value="ECO:0007669"/>
    <property type="project" value="InterPro"/>
</dbReference>
<dbReference type="CDD" id="cd00051">
    <property type="entry name" value="EFh"/>
    <property type="match status" value="2"/>
</dbReference>
<dbReference type="FunFam" id="1.10.238.10:FF:000058">
    <property type="entry name" value="Calmodulin"/>
    <property type="match status" value="1"/>
</dbReference>
<dbReference type="FunFam" id="1.10.238.10:FF:000257">
    <property type="entry name" value="Calmodulin"/>
    <property type="match status" value="1"/>
</dbReference>
<dbReference type="FunFam" id="1.10.238.10:FF:000027">
    <property type="entry name" value="Calmodulin (CaM)"/>
    <property type="match status" value="1"/>
</dbReference>
<dbReference type="Gene3D" id="1.10.238.10">
    <property type="entry name" value="EF-hand"/>
    <property type="match status" value="3"/>
</dbReference>
<dbReference type="InterPro" id="IPR050230">
    <property type="entry name" value="CALM/Myosin/TropC-like"/>
</dbReference>
<dbReference type="InterPro" id="IPR011992">
    <property type="entry name" value="EF-hand-dom_pair"/>
</dbReference>
<dbReference type="InterPro" id="IPR018247">
    <property type="entry name" value="EF_Hand_1_Ca_BS"/>
</dbReference>
<dbReference type="InterPro" id="IPR002048">
    <property type="entry name" value="EF_hand_dom"/>
</dbReference>
<dbReference type="PANTHER" id="PTHR23048:SF0">
    <property type="entry name" value="CALMODULIN LIKE 3"/>
    <property type="match status" value="1"/>
</dbReference>
<dbReference type="PANTHER" id="PTHR23048">
    <property type="entry name" value="MYOSIN LIGHT CHAIN 1, 3"/>
    <property type="match status" value="1"/>
</dbReference>
<dbReference type="Pfam" id="PF13499">
    <property type="entry name" value="EF-hand_7"/>
    <property type="match status" value="2"/>
</dbReference>
<dbReference type="PRINTS" id="PR00450">
    <property type="entry name" value="RECOVERIN"/>
</dbReference>
<dbReference type="SMART" id="SM00054">
    <property type="entry name" value="EFh"/>
    <property type="match status" value="4"/>
</dbReference>
<dbReference type="SMART" id="SM01184">
    <property type="entry name" value="efhand_Ca_insen"/>
    <property type="match status" value="1"/>
</dbReference>
<dbReference type="SUPFAM" id="SSF47473">
    <property type="entry name" value="EF-hand"/>
    <property type="match status" value="1"/>
</dbReference>
<dbReference type="PROSITE" id="PS00018">
    <property type="entry name" value="EF_HAND_1"/>
    <property type="match status" value="4"/>
</dbReference>
<dbReference type="PROSITE" id="PS50222">
    <property type="entry name" value="EF_HAND_2"/>
    <property type="match status" value="4"/>
</dbReference>
<accession>P61860</accession>
<accession>P40907</accession>
<accession>Q02052</accession>
<protein>
    <recommendedName>
        <fullName>Calmodulin</fullName>
        <shortName>CaM</shortName>
    </recommendedName>
</protein>
<proteinExistence type="inferred from homology"/>
<feature type="initiator methionine" description="Removed" evidence="1">
    <location>
        <position position="1"/>
    </location>
</feature>
<feature type="chain" id="PRO_0000198317" description="Calmodulin">
    <location>
        <begin position="2"/>
        <end position="149"/>
    </location>
</feature>
<feature type="domain" description="EF-hand 1" evidence="2">
    <location>
        <begin position="8"/>
        <end position="43"/>
    </location>
</feature>
<feature type="domain" description="EF-hand 2" evidence="2">
    <location>
        <begin position="44"/>
        <end position="79"/>
    </location>
</feature>
<feature type="domain" description="EF-hand 3" evidence="2">
    <location>
        <begin position="81"/>
        <end position="116"/>
    </location>
</feature>
<feature type="domain" description="EF-hand 4" evidence="2">
    <location>
        <begin position="117"/>
        <end position="149"/>
    </location>
</feature>
<feature type="binding site" evidence="2">
    <location>
        <position position="21"/>
    </location>
    <ligand>
        <name>Ca(2+)</name>
        <dbReference type="ChEBI" id="CHEBI:29108"/>
        <label>1</label>
    </ligand>
</feature>
<feature type="binding site" evidence="2">
    <location>
        <position position="23"/>
    </location>
    <ligand>
        <name>Ca(2+)</name>
        <dbReference type="ChEBI" id="CHEBI:29108"/>
        <label>1</label>
    </ligand>
</feature>
<feature type="binding site" evidence="2">
    <location>
        <position position="25"/>
    </location>
    <ligand>
        <name>Ca(2+)</name>
        <dbReference type="ChEBI" id="CHEBI:29108"/>
        <label>1</label>
    </ligand>
</feature>
<feature type="binding site" evidence="2">
    <location>
        <position position="27"/>
    </location>
    <ligand>
        <name>Ca(2+)</name>
        <dbReference type="ChEBI" id="CHEBI:29108"/>
        <label>1</label>
    </ligand>
</feature>
<feature type="binding site" evidence="2">
    <location>
        <position position="32"/>
    </location>
    <ligand>
        <name>Ca(2+)</name>
        <dbReference type="ChEBI" id="CHEBI:29108"/>
        <label>1</label>
    </ligand>
</feature>
<feature type="binding site" evidence="2">
    <location>
        <position position="57"/>
    </location>
    <ligand>
        <name>Ca(2+)</name>
        <dbReference type="ChEBI" id="CHEBI:29108"/>
        <label>2</label>
    </ligand>
</feature>
<feature type="binding site" evidence="2">
    <location>
        <position position="59"/>
    </location>
    <ligand>
        <name>Ca(2+)</name>
        <dbReference type="ChEBI" id="CHEBI:29108"/>
        <label>2</label>
    </ligand>
</feature>
<feature type="binding site" evidence="2">
    <location>
        <position position="61"/>
    </location>
    <ligand>
        <name>Ca(2+)</name>
        <dbReference type="ChEBI" id="CHEBI:29108"/>
        <label>2</label>
    </ligand>
</feature>
<feature type="binding site" evidence="2">
    <location>
        <position position="63"/>
    </location>
    <ligand>
        <name>Ca(2+)</name>
        <dbReference type="ChEBI" id="CHEBI:29108"/>
        <label>2</label>
    </ligand>
</feature>
<feature type="binding site" evidence="2">
    <location>
        <position position="68"/>
    </location>
    <ligand>
        <name>Ca(2+)</name>
        <dbReference type="ChEBI" id="CHEBI:29108"/>
        <label>2</label>
    </ligand>
</feature>
<feature type="binding site" evidence="2">
    <location>
        <position position="94"/>
    </location>
    <ligand>
        <name>Ca(2+)</name>
        <dbReference type="ChEBI" id="CHEBI:29108"/>
        <label>3</label>
    </ligand>
</feature>
<feature type="binding site" evidence="2">
    <location>
        <position position="96"/>
    </location>
    <ligand>
        <name>Ca(2+)</name>
        <dbReference type="ChEBI" id="CHEBI:29108"/>
        <label>3</label>
    </ligand>
</feature>
<feature type="binding site" evidence="2">
    <location>
        <position position="98"/>
    </location>
    <ligand>
        <name>Ca(2+)</name>
        <dbReference type="ChEBI" id="CHEBI:29108"/>
        <label>3</label>
    </ligand>
</feature>
<feature type="binding site" evidence="2">
    <location>
        <position position="105"/>
    </location>
    <ligand>
        <name>Ca(2+)</name>
        <dbReference type="ChEBI" id="CHEBI:29108"/>
        <label>3</label>
    </ligand>
</feature>
<feature type="binding site" evidence="2">
    <location>
        <position position="130"/>
    </location>
    <ligand>
        <name>Ca(2+)</name>
        <dbReference type="ChEBI" id="CHEBI:29108"/>
        <label>4</label>
    </ligand>
</feature>
<feature type="binding site" evidence="2">
    <location>
        <position position="132"/>
    </location>
    <ligand>
        <name>Ca(2+)</name>
        <dbReference type="ChEBI" id="CHEBI:29108"/>
        <label>4</label>
    </ligand>
</feature>
<feature type="binding site" evidence="2">
    <location>
        <position position="134"/>
    </location>
    <ligand>
        <name>Ca(2+)</name>
        <dbReference type="ChEBI" id="CHEBI:29108"/>
        <label>4</label>
    </ligand>
</feature>
<feature type="binding site" evidence="2">
    <location>
        <position position="136"/>
    </location>
    <ligand>
        <name>Ca(2+)</name>
        <dbReference type="ChEBI" id="CHEBI:29108"/>
        <label>4</label>
    </ligand>
</feature>
<feature type="binding site" evidence="2">
    <location>
        <position position="141"/>
    </location>
    <ligand>
        <name>Ca(2+)</name>
        <dbReference type="ChEBI" id="CHEBI:29108"/>
        <label>4</label>
    </ligand>
</feature>
<feature type="modified residue" description="N-acetylalanine" evidence="1">
    <location>
        <position position="2"/>
    </location>
</feature>
<organism>
    <name type="scientific">Colletotrichum trifolii</name>
    <dbReference type="NCBI Taxonomy" id="5466"/>
    <lineage>
        <taxon>Eukaryota</taxon>
        <taxon>Fungi</taxon>
        <taxon>Dikarya</taxon>
        <taxon>Ascomycota</taxon>
        <taxon>Pezizomycotina</taxon>
        <taxon>Sordariomycetes</taxon>
        <taxon>Hypocreomycetidae</taxon>
        <taxon>Glomerellales</taxon>
        <taxon>Glomerellaceae</taxon>
        <taxon>Colletotrichum</taxon>
        <taxon>Colletotrichum orbiculare species complex</taxon>
    </lineage>
</organism>
<name>CALM_COLTR</name>